<proteinExistence type="inferred from homology"/>
<feature type="chain" id="PRO_1000214445" description="Large ribosomal subunit protein uL2">
    <location>
        <begin position="1"/>
        <end position="274"/>
    </location>
</feature>
<feature type="region of interest" description="Disordered" evidence="2">
    <location>
        <begin position="28"/>
        <end position="54"/>
    </location>
</feature>
<feature type="region of interest" description="Disordered" evidence="2">
    <location>
        <begin position="221"/>
        <end position="274"/>
    </location>
</feature>
<feature type="compositionally biased region" description="Polar residues" evidence="2">
    <location>
        <begin position="39"/>
        <end position="49"/>
    </location>
</feature>
<organism>
    <name type="scientific">Edwardsiella ictaluri (strain 93-146)</name>
    <dbReference type="NCBI Taxonomy" id="634503"/>
    <lineage>
        <taxon>Bacteria</taxon>
        <taxon>Pseudomonadati</taxon>
        <taxon>Pseudomonadota</taxon>
        <taxon>Gammaproteobacteria</taxon>
        <taxon>Enterobacterales</taxon>
        <taxon>Hafniaceae</taxon>
        <taxon>Edwardsiella</taxon>
    </lineage>
</organism>
<evidence type="ECO:0000255" key="1">
    <source>
        <dbReference type="HAMAP-Rule" id="MF_01320"/>
    </source>
</evidence>
<evidence type="ECO:0000256" key="2">
    <source>
        <dbReference type="SAM" id="MobiDB-lite"/>
    </source>
</evidence>
<evidence type="ECO:0000305" key="3"/>
<gene>
    <name evidence="1" type="primary">rplB</name>
    <name type="ordered locus">NT01EI_3591</name>
</gene>
<sequence>MAIVKCKPTSPGRRHVVKVVNPELHKGKPFAPLLEKNSKTGGRNNNGRITTRHIGGGHKQQYRLIDFKRNKDGIPAVVERLEYDPNRSANIALVLYKDGERRYILAAKGLKAGDQIQSGVDAAIKAGNTLPMRNIPVGSTVHNVEMKPGKGGQLARSAGAYVQIVARDGAYVTLRLRSGEMRKIPADCRATLGEVGNAEHMLRVLGKAGAARWRGVRPTVRGTAMNPVDHPHGGGEGRNFGKHPVTPWGVQTKGKKTRSNKRTDKFIVRRRSKK</sequence>
<name>RL2_EDWI9</name>
<dbReference type="EMBL" id="CP001600">
    <property type="protein sequence ID" value="ACR70719.1"/>
    <property type="molecule type" value="Genomic_DNA"/>
</dbReference>
<dbReference type="RefSeq" id="WP_012850029.1">
    <property type="nucleotide sequence ID" value="NZ_CP169062.1"/>
</dbReference>
<dbReference type="SMR" id="C5BGM2"/>
<dbReference type="STRING" id="67780.B6E78_09555"/>
<dbReference type="GeneID" id="72529998"/>
<dbReference type="KEGG" id="eic:NT01EI_3591"/>
<dbReference type="HOGENOM" id="CLU_036235_2_1_6"/>
<dbReference type="OrthoDB" id="9778722at2"/>
<dbReference type="Proteomes" id="UP000001485">
    <property type="component" value="Chromosome"/>
</dbReference>
<dbReference type="GO" id="GO:0015934">
    <property type="term" value="C:large ribosomal subunit"/>
    <property type="evidence" value="ECO:0007669"/>
    <property type="project" value="InterPro"/>
</dbReference>
<dbReference type="GO" id="GO:0019843">
    <property type="term" value="F:rRNA binding"/>
    <property type="evidence" value="ECO:0007669"/>
    <property type="project" value="UniProtKB-UniRule"/>
</dbReference>
<dbReference type="GO" id="GO:0003735">
    <property type="term" value="F:structural constituent of ribosome"/>
    <property type="evidence" value="ECO:0007669"/>
    <property type="project" value="InterPro"/>
</dbReference>
<dbReference type="GO" id="GO:0016740">
    <property type="term" value="F:transferase activity"/>
    <property type="evidence" value="ECO:0007669"/>
    <property type="project" value="InterPro"/>
</dbReference>
<dbReference type="GO" id="GO:0002181">
    <property type="term" value="P:cytoplasmic translation"/>
    <property type="evidence" value="ECO:0007669"/>
    <property type="project" value="TreeGrafter"/>
</dbReference>
<dbReference type="FunFam" id="2.30.30.30:FF:000001">
    <property type="entry name" value="50S ribosomal protein L2"/>
    <property type="match status" value="1"/>
</dbReference>
<dbReference type="FunFam" id="2.40.50.140:FF:000003">
    <property type="entry name" value="50S ribosomal protein L2"/>
    <property type="match status" value="1"/>
</dbReference>
<dbReference type="FunFam" id="4.10.950.10:FF:000001">
    <property type="entry name" value="50S ribosomal protein L2"/>
    <property type="match status" value="1"/>
</dbReference>
<dbReference type="Gene3D" id="2.30.30.30">
    <property type="match status" value="1"/>
</dbReference>
<dbReference type="Gene3D" id="2.40.50.140">
    <property type="entry name" value="Nucleic acid-binding proteins"/>
    <property type="match status" value="1"/>
</dbReference>
<dbReference type="Gene3D" id="4.10.950.10">
    <property type="entry name" value="Ribosomal protein L2, domain 3"/>
    <property type="match status" value="1"/>
</dbReference>
<dbReference type="HAMAP" id="MF_01320_B">
    <property type="entry name" value="Ribosomal_uL2_B"/>
    <property type="match status" value="1"/>
</dbReference>
<dbReference type="InterPro" id="IPR012340">
    <property type="entry name" value="NA-bd_OB-fold"/>
</dbReference>
<dbReference type="InterPro" id="IPR014722">
    <property type="entry name" value="Rib_uL2_dom2"/>
</dbReference>
<dbReference type="InterPro" id="IPR002171">
    <property type="entry name" value="Ribosomal_uL2"/>
</dbReference>
<dbReference type="InterPro" id="IPR005880">
    <property type="entry name" value="Ribosomal_uL2_bac/org-type"/>
</dbReference>
<dbReference type="InterPro" id="IPR022669">
    <property type="entry name" value="Ribosomal_uL2_C"/>
</dbReference>
<dbReference type="InterPro" id="IPR022671">
    <property type="entry name" value="Ribosomal_uL2_CS"/>
</dbReference>
<dbReference type="InterPro" id="IPR014726">
    <property type="entry name" value="Ribosomal_uL2_dom3"/>
</dbReference>
<dbReference type="InterPro" id="IPR022666">
    <property type="entry name" value="Ribosomal_uL2_RNA-bd_dom"/>
</dbReference>
<dbReference type="InterPro" id="IPR008991">
    <property type="entry name" value="Translation_prot_SH3-like_sf"/>
</dbReference>
<dbReference type="NCBIfam" id="TIGR01171">
    <property type="entry name" value="rplB_bact"/>
    <property type="match status" value="1"/>
</dbReference>
<dbReference type="PANTHER" id="PTHR13691:SF5">
    <property type="entry name" value="LARGE RIBOSOMAL SUBUNIT PROTEIN UL2M"/>
    <property type="match status" value="1"/>
</dbReference>
<dbReference type="PANTHER" id="PTHR13691">
    <property type="entry name" value="RIBOSOMAL PROTEIN L2"/>
    <property type="match status" value="1"/>
</dbReference>
<dbReference type="Pfam" id="PF00181">
    <property type="entry name" value="Ribosomal_L2"/>
    <property type="match status" value="1"/>
</dbReference>
<dbReference type="Pfam" id="PF03947">
    <property type="entry name" value="Ribosomal_L2_C"/>
    <property type="match status" value="1"/>
</dbReference>
<dbReference type="PIRSF" id="PIRSF002158">
    <property type="entry name" value="Ribosomal_L2"/>
    <property type="match status" value="1"/>
</dbReference>
<dbReference type="SMART" id="SM01383">
    <property type="entry name" value="Ribosomal_L2"/>
    <property type="match status" value="1"/>
</dbReference>
<dbReference type="SMART" id="SM01382">
    <property type="entry name" value="Ribosomal_L2_C"/>
    <property type="match status" value="1"/>
</dbReference>
<dbReference type="SUPFAM" id="SSF50249">
    <property type="entry name" value="Nucleic acid-binding proteins"/>
    <property type="match status" value="1"/>
</dbReference>
<dbReference type="SUPFAM" id="SSF50104">
    <property type="entry name" value="Translation proteins SH3-like domain"/>
    <property type="match status" value="1"/>
</dbReference>
<dbReference type="PROSITE" id="PS00467">
    <property type="entry name" value="RIBOSOMAL_L2"/>
    <property type="match status" value="1"/>
</dbReference>
<comment type="function">
    <text evidence="1">One of the primary rRNA binding proteins. Required for association of the 30S and 50S subunits to form the 70S ribosome, for tRNA binding and peptide bond formation. It has been suggested to have peptidyltransferase activity; this is somewhat controversial. Makes several contacts with the 16S rRNA in the 70S ribosome.</text>
</comment>
<comment type="subunit">
    <text evidence="1">Part of the 50S ribosomal subunit. Forms a bridge to the 30S subunit in the 70S ribosome.</text>
</comment>
<comment type="similarity">
    <text evidence="1">Belongs to the universal ribosomal protein uL2 family.</text>
</comment>
<accession>C5BGM2</accession>
<protein>
    <recommendedName>
        <fullName evidence="1">Large ribosomal subunit protein uL2</fullName>
    </recommendedName>
    <alternativeName>
        <fullName evidence="3">50S ribosomal protein L2</fullName>
    </alternativeName>
</protein>
<reference key="1">
    <citation type="submission" date="2009-03" db="EMBL/GenBank/DDBJ databases">
        <title>Complete genome sequence of Edwardsiella ictaluri 93-146.</title>
        <authorList>
            <person name="Williams M.L."/>
            <person name="Gillaspy A.F."/>
            <person name="Dyer D.W."/>
            <person name="Thune R.L."/>
            <person name="Waldbieser G.C."/>
            <person name="Schuster S.C."/>
            <person name="Gipson J."/>
            <person name="Zaitshik J."/>
            <person name="Landry C."/>
            <person name="Lawrence M.L."/>
        </authorList>
    </citation>
    <scope>NUCLEOTIDE SEQUENCE [LARGE SCALE GENOMIC DNA]</scope>
    <source>
        <strain>93-146</strain>
    </source>
</reference>
<keyword id="KW-0687">Ribonucleoprotein</keyword>
<keyword id="KW-0689">Ribosomal protein</keyword>
<keyword id="KW-0694">RNA-binding</keyword>
<keyword id="KW-0699">rRNA-binding</keyword>